<name>PFKA_STRZJ</name>
<evidence type="ECO:0000255" key="1">
    <source>
        <dbReference type="HAMAP-Rule" id="MF_00339"/>
    </source>
</evidence>
<feature type="chain" id="PRO_1000192383" description="ATP-dependent 6-phosphofructokinase">
    <location>
        <begin position="1"/>
        <end position="335"/>
    </location>
</feature>
<feature type="active site" description="Proton acceptor" evidence="1">
    <location>
        <position position="127"/>
    </location>
</feature>
<feature type="binding site" evidence="1">
    <location>
        <position position="11"/>
    </location>
    <ligand>
        <name>ATP</name>
        <dbReference type="ChEBI" id="CHEBI:30616"/>
    </ligand>
</feature>
<feature type="binding site" evidence="1">
    <location>
        <begin position="21"/>
        <end position="25"/>
    </location>
    <ligand>
        <name>ADP</name>
        <dbReference type="ChEBI" id="CHEBI:456216"/>
        <note>allosteric activator; ligand shared between dimeric partners</note>
    </ligand>
</feature>
<feature type="binding site" evidence="1">
    <location>
        <begin position="72"/>
        <end position="73"/>
    </location>
    <ligand>
        <name>ATP</name>
        <dbReference type="ChEBI" id="CHEBI:30616"/>
    </ligand>
</feature>
<feature type="binding site" evidence="1">
    <location>
        <begin position="102"/>
        <end position="105"/>
    </location>
    <ligand>
        <name>ATP</name>
        <dbReference type="ChEBI" id="CHEBI:30616"/>
    </ligand>
</feature>
<feature type="binding site" evidence="1">
    <location>
        <position position="103"/>
    </location>
    <ligand>
        <name>Mg(2+)</name>
        <dbReference type="ChEBI" id="CHEBI:18420"/>
        <note>catalytic</note>
    </ligand>
</feature>
<feature type="binding site" description="in other chain" evidence="1">
    <location>
        <begin position="125"/>
        <end position="127"/>
    </location>
    <ligand>
        <name>substrate</name>
        <note>ligand shared between dimeric partners</note>
    </ligand>
</feature>
<feature type="binding site" description="in other chain" evidence="1">
    <location>
        <position position="154"/>
    </location>
    <ligand>
        <name>ADP</name>
        <dbReference type="ChEBI" id="CHEBI:456216"/>
        <note>allosteric activator; ligand shared between dimeric partners</note>
    </ligand>
</feature>
<feature type="binding site" evidence="1">
    <location>
        <position position="162"/>
    </location>
    <ligand>
        <name>substrate</name>
        <note>ligand shared between dimeric partners</note>
    </ligand>
</feature>
<feature type="binding site" description="in other chain" evidence="1">
    <location>
        <begin position="169"/>
        <end position="171"/>
    </location>
    <ligand>
        <name>substrate</name>
        <note>ligand shared between dimeric partners</note>
    </ligand>
</feature>
<feature type="binding site" description="in other chain" evidence="1">
    <location>
        <begin position="185"/>
        <end position="187"/>
    </location>
    <ligand>
        <name>ADP</name>
        <dbReference type="ChEBI" id="CHEBI:456216"/>
        <note>allosteric activator; ligand shared between dimeric partners</note>
    </ligand>
</feature>
<feature type="binding site" description="in other chain" evidence="1">
    <location>
        <begin position="213"/>
        <end position="215"/>
    </location>
    <ligand>
        <name>ADP</name>
        <dbReference type="ChEBI" id="CHEBI:456216"/>
        <note>allosteric activator; ligand shared between dimeric partners</note>
    </ligand>
</feature>
<feature type="binding site" description="in other chain" evidence="1">
    <location>
        <position position="222"/>
    </location>
    <ligand>
        <name>substrate</name>
        <note>ligand shared between dimeric partners</note>
    </ligand>
</feature>
<feature type="binding site" evidence="1">
    <location>
        <position position="244"/>
    </location>
    <ligand>
        <name>substrate</name>
        <note>ligand shared between dimeric partners</note>
    </ligand>
</feature>
<feature type="binding site" description="in other chain" evidence="1">
    <location>
        <begin position="250"/>
        <end position="253"/>
    </location>
    <ligand>
        <name>substrate</name>
        <note>ligand shared between dimeric partners</note>
    </ligand>
</feature>
<keyword id="KW-0021">Allosteric enzyme</keyword>
<keyword id="KW-0067">ATP-binding</keyword>
<keyword id="KW-0963">Cytoplasm</keyword>
<keyword id="KW-0324">Glycolysis</keyword>
<keyword id="KW-0418">Kinase</keyword>
<keyword id="KW-0460">Magnesium</keyword>
<keyword id="KW-0479">Metal-binding</keyword>
<keyword id="KW-0547">Nucleotide-binding</keyword>
<keyword id="KW-0808">Transferase</keyword>
<reference key="1">
    <citation type="journal article" date="2010" name="Genome Biol.">
        <title>Structure and dynamics of the pan-genome of Streptococcus pneumoniae and closely related species.</title>
        <authorList>
            <person name="Donati C."/>
            <person name="Hiller N.L."/>
            <person name="Tettelin H."/>
            <person name="Muzzi A."/>
            <person name="Croucher N.J."/>
            <person name="Angiuoli S.V."/>
            <person name="Oggioni M."/>
            <person name="Dunning Hotopp J.C."/>
            <person name="Hu F.Z."/>
            <person name="Riley D.R."/>
            <person name="Covacci A."/>
            <person name="Mitchell T.J."/>
            <person name="Bentley S.D."/>
            <person name="Kilian M."/>
            <person name="Ehrlich G.D."/>
            <person name="Rappuoli R."/>
            <person name="Moxon E.R."/>
            <person name="Masignani V."/>
        </authorList>
    </citation>
    <scope>NUCLEOTIDE SEQUENCE [LARGE SCALE GENOMIC DNA]</scope>
    <source>
        <strain>JJA</strain>
    </source>
</reference>
<accession>C1CDP4</accession>
<comment type="function">
    <text evidence="1">Catalyzes the phosphorylation of D-fructose 6-phosphate to fructose 1,6-bisphosphate by ATP, the first committing step of glycolysis.</text>
</comment>
<comment type="catalytic activity">
    <reaction evidence="1">
        <text>beta-D-fructose 6-phosphate + ATP = beta-D-fructose 1,6-bisphosphate + ADP + H(+)</text>
        <dbReference type="Rhea" id="RHEA:16109"/>
        <dbReference type="ChEBI" id="CHEBI:15378"/>
        <dbReference type="ChEBI" id="CHEBI:30616"/>
        <dbReference type="ChEBI" id="CHEBI:32966"/>
        <dbReference type="ChEBI" id="CHEBI:57634"/>
        <dbReference type="ChEBI" id="CHEBI:456216"/>
        <dbReference type="EC" id="2.7.1.11"/>
    </reaction>
</comment>
<comment type="cofactor">
    <cofactor evidence="1">
        <name>Mg(2+)</name>
        <dbReference type="ChEBI" id="CHEBI:18420"/>
    </cofactor>
</comment>
<comment type="activity regulation">
    <text evidence="1">Allosterically activated by ADP and other diphosphonucleosides, and allosterically inhibited by phosphoenolpyruvate.</text>
</comment>
<comment type="pathway">
    <text evidence="1">Carbohydrate degradation; glycolysis; D-glyceraldehyde 3-phosphate and glycerone phosphate from D-glucose: step 3/4.</text>
</comment>
<comment type="subunit">
    <text evidence="1">Homotetramer.</text>
</comment>
<comment type="subcellular location">
    <subcellularLocation>
        <location evidence="1">Cytoplasm</location>
    </subcellularLocation>
</comment>
<comment type="similarity">
    <text evidence="1">Belongs to the phosphofructokinase type A (PFKA) family. ATP-dependent PFK group I subfamily. Prokaryotic clade 'B1' sub-subfamily.</text>
</comment>
<proteinExistence type="inferred from homology"/>
<organism>
    <name type="scientific">Streptococcus pneumoniae (strain JJA)</name>
    <dbReference type="NCBI Taxonomy" id="488222"/>
    <lineage>
        <taxon>Bacteria</taxon>
        <taxon>Bacillati</taxon>
        <taxon>Bacillota</taxon>
        <taxon>Bacilli</taxon>
        <taxon>Lactobacillales</taxon>
        <taxon>Streptococcaceae</taxon>
        <taxon>Streptococcus</taxon>
    </lineage>
</organism>
<sequence length="335" mass="35174">MKRIAVLTSGGDAPGMNAAIRAVVRQAISEGMEVFGIYDGYAGMVAGEIHPLDAASVGDIISRGGTFLHSARYPEFAQLEGQLKGIEQLKKHGIEGVVVIGGDGSYHGAMRLTEHGFPAIGLPGTIDNDIVGTDFTIGFDTAVTTAMDAIDKIRDTSSSHRRTFVIEVMGRNAGDIALWAGIATGADEIIIPEAGFKMEDIVASIKAGYECGKKHNIIVLAEGVMSAAEFGQKLKEAGDTSDLRVTELGHIQRGGSPTARDRVLASRMGAHAVKLLKEGIGGVAVGIRNEKMVENPILGTAEEGALFSLTAEGKIVVNNPHKADIELSSLNKSLS</sequence>
<gene>
    <name evidence="1" type="primary">pfkA</name>
    <name type="ordered locus">SPJ_0837</name>
</gene>
<protein>
    <recommendedName>
        <fullName evidence="1">ATP-dependent 6-phosphofructokinase</fullName>
        <shortName evidence="1">ATP-PFK</shortName>
        <shortName evidence="1">Phosphofructokinase</shortName>
        <ecNumber evidence="1">2.7.1.11</ecNumber>
    </recommendedName>
    <alternativeName>
        <fullName evidence="1">Phosphohexokinase</fullName>
    </alternativeName>
</protein>
<dbReference type="EC" id="2.7.1.11" evidence="1"/>
<dbReference type="EMBL" id="CP000919">
    <property type="protein sequence ID" value="ACO19139.1"/>
    <property type="molecule type" value="Genomic_DNA"/>
</dbReference>
<dbReference type="RefSeq" id="WP_000820852.1">
    <property type="nucleotide sequence ID" value="NC_012466.1"/>
</dbReference>
<dbReference type="SMR" id="C1CDP4"/>
<dbReference type="GeneID" id="45653754"/>
<dbReference type="KEGG" id="sjj:SPJ_0837"/>
<dbReference type="HOGENOM" id="CLU_020655_0_1_9"/>
<dbReference type="UniPathway" id="UPA00109">
    <property type="reaction ID" value="UER00182"/>
</dbReference>
<dbReference type="Proteomes" id="UP000002206">
    <property type="component" value="Chromosome"/>
</dbReference>
<dbReference type="GO" id="GO:0005945">
    <property type="term" value="C:6-phosphofructokinase complex"/>
    <property type="evidence" value="ECO:0007669"/>
    <property type="project" value="TreeGrafter"/>
</dbReference>
<dbReference type="GO" id="GO:0003872">
    <property type="term" value="F:6-phosphofructokinase activity"/>
    <property type="evidence" value="ECO:0007669"/>
    <property type="project" value="UniProtKB-UniRule"/>
</dbReference>
<dbReference type="GO" id="GO:0016208">
    <property type="term" value="F:AMP binding"/>
    <property type="evidence" value="ECO:0007669"/>
    <property type="project" value="TreeGrafter"/>
</dbReference>
<dbReference type="GO" id="GO:0005524">
    <property type="term" value="F:ATP binding"/>
    <property type="evidence" value="ECO:0007669"/>
    <property type="project" value="UniProtKB-KW"/>
</dbReference>
<dbReference type="GO" id="GO:0070095">
    <property type="term" value="F:fructose-6-phosphate binding"/>
    <property type="evidence" value="ECO:0007669"/>
    <property type="project" value="TreeGrafter"/>
</dbReference>
<dbReference type="GO" id="GO:0042802">
    <property type="term" value="F:identical protein binding"/>
    <property type="evidence" value="ECO:0007669"/>
    <property type="project" value="TreeGrafter"/>
</dbReference>
<dbReference type="GO" id="GO:0046872">
    <property type="term" value="F:metal ion binding"/>
    <property type="evidence" value="ECO:0007669"/>
    <property type="project" value="UniProtKB-KW"/>
</dbReference>
<dbReference type="GO" id="GO:0048029">
    <property type="term" value="F:monosaccharide binding"/>
    <property type="evidence" value="ECO:0007669"/>
    <property type="project" value="TreeGrafter"/>
</dbReference>
<dbReference type="GO" id="GO:0061621">
    <property type="term" value="P:canonical glycolysis"/>
    <property type="evidence" value="ECO:0007669"/>
    <property type="project" value="TreeGrafter"/>
</dbReference>
<dbReference type="GO" id="GO:0030388">
    <property type="term" value="P:fructose 1,6-bisphosphate metabolic process"/>
    <property type="evidence" value="ECO:0007669"/>
    <property type="project" value="TreeGrafter"/>
</dbReference>
<dbReference type="GO" id="GO:0006002">
    <property type="term" value="P:fructose 6-phosphate metabolic process"/>
    <property type="evidence" value="ECO:0007669"/>
    <property type="project" value="InterPro"/>
</dbReference>
<dbReference type="CDD" id="cd00763">
    <property type="entry name" value="Bacterial_PFK"/>
    <property type="match status" value="1"/>
</dbReference>
<dbReference type="FunFam" id="3.40.50.450:FF:000001">
    <property type="entry name" value="ATP-dependent 6-phosphofructokinase"/>
    <property type="match status" value="1"/>
</dbReference>
<dbReference type="FunFam" id="3.40.50.460:FF:000002">
    <property type="entry name" value="ATP-dependent 6-phosphofructokinase"/>
    <property type="match status" value="1"/>
</dbReference>
<dbReference type="Gene3D" id="3.40.50.450">
    <property type="match status" value="1"/>
</dbReference>
<dbReference type="Gene3D" id="3.40.50.460">
    <property type="entry name" value="Phosphofructokinase domain"/>
    <property type="match status" value="1"/>
</dbReference>
<dbReference type="HAMAP" id="MF_00339">
    <property type="entry name" value="Phosphofructokinase_I_B1"/>
    <property type="match status" value="1"/>
</dbReference>
<dbReference type="InterPro" id="IPR022953">
    <property type="entry name" value="ATP_PFK"/>
</dbReference>
<dbReference type="InterPro" id="IPR012003">
    <property type="entry name" value="ATP_PFK_prok-type"/>
</dbReference>
<dbReference type="InterPro" id="IPR012828">
    <property type="entry name" value="PFKA_ATP_prok"/>
</dbReference>
<dbReference type="InterPro" id="IPR015912">
    <property type="entry name" value="Phosphofructokinase_CS"/>
</dbReference>
<dbReference type="InterPro" id="IPR000023">
    <property type="entry name" value="Phosphofructokinase_dom"/>
</dbReference>
<dbReference type="InterPro" id="IPR035966">
    <property type="entry name" value="PKF_sf"/>
</dbReference>
<dbReference type="NCBIfam" id="TIGR02482">
    <property type="entry name" value="PFKA_ATP"/>
    <property type="match status" value="1"/>
</dbReference>
<dbReference type="NCBIfam" id="NF002872">
    <property type="entry name" value="PRK03202.1"/>
    <property type="match status" value="1"/>
</dbReference>
<dbReference type="PANTHER" id="PTHR13697:SF4">
    <property type="entry name" value="ATP-DEPENDENT 6-PHOSPHOFRUCTOKINASE"/>
    <property type="match status" value="1"/>
</dbReference>
<dbReference type="PANTHER" id="PTHR13697">
    <property type="entry name" value="PHOSPHOFRUCTOKINASE"/>
    <property type="match status" value="1"/>
</dbReference>
<dbReference type="Pfam" id="PF00365">
    <property type="entry name" value="PFK"/>
    <property type="match status" value="1"/>
</dbReference>
<dbReference type="PIRSF" id="PIRSF000532">
    <property type="entry name" value="ATP_PFK_prok"/>
    <property type="match status" value="1"/>
</dbReference>
<dbReference type="PRINTS" id="PR00476">
    <property type="entry name" value="PHFRCTKINASE"/>
</dbReference>
<dbReference type="SUPFAM" id="SSF53784">
    <property type="entry name" value="Phosphofructokinase"/>
    <property type="match status" value="1"/>
</dbReference>
<dbReference type="PROSITE" id="PS00433">
    <property type="entry name" value="PHOSPHOFRUCTOKINASE"/>
    <property type="match status" value="1"/>
</dbReference>